<keyword id="KW-0049">Antioxidant</keyword>
<keyword id="KW-0963">Cytoplasm</keyword>
<keyword id="KW-0903">Direct protein sequencing</keyword>
<keyword id="KW-0479">Metal-binding</keyword>
<keyword id="KW-0533">Nickel</keyword>
<keyword id="KW-0560">Oxidoreductase</keyword>
<dbReference type="EC" id="1.15.1.1"/>
<dbReference type="GO" id="GO:0005737">
    <property type="term" value="C:cytoplasm"/>
    <property type="evidence" value="ECO:0007669"/>
    <property type="project" value="UniProtKB-SubCell"/>
</dbReference>
<dbReference type="GO" id="GO:0046872">
    <property type="term" value="F:metal ion binding"/>
    <property type="evidence" value="ECO:0007669"/>
    <property type="project" value="UniProtKB-KW"/>
</dbReference>
<dbReference type="GO" id="GO:0004784">
    <property type="term" value="F:superoxide dismutase activity"/>
    <property type="evidence" value="ECO:0007669"/>
    <property type="project" value="UniProtKB-EC"/>
</dbReference>
<name>SODN_STRGR</name>
<feature type="chain" id="PRO_0000218262" description="Superoxide dismutase [Ni]">
    <location>
        <begin position="1"/>
        <end position="14" status="greater than"/>
    </location>
</feature>
<feature type="non-terminal residue">
    <location>
        <position position="14"/>
    </location>
</feature>
<proteinExistence type="evidence at protein level"/>
<gene>
    <name type="primary">sodN</name>
    <name type="synonym">sod1</name>
</gene>
<protein>
    <recommendedName>
        <fullName>Superoxide dismutase [Ni]</fullName>
        <ecNumber>1.15.1.1</ecNumber>
    </recommendedName>
    <alternativeName>
        <fullName>NiSOD</fullName>
    </alternativeName>
    <alternativeName>
        <fullName>Nickel-containing superoxide dismutase</fullName>
    </alternativeName>
</protein>
<sequence length="14" mass="1457">HSDLPSGVYDPAQA</sequence>
<comment type="catalytic activity">
    <reaction>
        <text>2 superoxide + 2 H(+) = H2O2 + O2</text>
        <dbReference type="Rhea" id="RHEA:20696"/>
        <dbReference type="ChEBI" id="CHEBI:15378"/>
        <dbReference type="ChEBI" id="CHEBI:15379"/>
        <dbReference type="ChEBI" id="CHEBI:16240"/>
        <dbReference type="ChEBI" id="CHEBI:18421"/>
        <dbReference type="EC" id="1.15.1.1"/>
    </reaction>
</comment>
<comment type="cofactor">
    <cofactor>
        <name>Ni(2+)</name>
        <dbReference type="ChEBI" id="CHEBI:49786"/>
    </cofactor>
</comment>
<comment type="subunit">
    <text evidence="1">Homohexamer.</text>
</comment>
<comment type="subcellular location">
    <subcellularLocation>
        <location>Cytoplasm</location>
    </subcellularLocation>
</comment>
<comment type="similarity">
    <text evidence="2">Belongs to the nickel superoxide dismutase family.</text>
</comment>
<reference key="1">
    <citation type="journal article" date="1996" name="Arch. Biochem. Biophys.">
        <title>Unique isozymes of superoxide dismutase in Streptomyces griseus.</title>
        <authorList>
            <person name="Youn H.-D."/>
            <person name="Youn H."/>
            <person name="Lee J.-W."/>
            <person name="Yim Y.-I."/>
            <person name="Lee J.K."/>
            <person name="Hah Y.C."/>
            <person name="Kang S.-O."/>
        </authorList>
    </citation>
    <scope>PROTEIN SEQUENCE</scope>
    <source>
        <strain>KCTC 9006</strain>
    </source>
</reference>
<evidence type="ECO:0000250" key="1"/>
<evidence type="ECO:0000305" key="2"/>
<organism>
    <name type="scientific">Streptomyces griseus</name>
    <dbReference type="NCBI Taxonomy" id="1911"/>
    <lineage>
        <taxon>Bacteria</taxon>
        <taxon>Bacillati</taxon>
        <taxon>Actinomycetota</taxon>
        <taxon>Actinomycetes</taxon>
        <taxon>Kitasatosporales</taxon>
        <taxon>Streptomycetaceae</taxon>
        <taxon>Streptomyces</taxon>
    </lineage>
</organism>
<accession>P80732</accession>